<evidence type="ECO:0000255" key="1">
    <source>
        <dbReference type="HAMAP-Rule" id="MF_00294"/>
    </source>
</evidence>
<reference key="1">
    <citation type="journal article" date="2007" name="PLoS ONE">
        <title>Paradoxical DNA repair and peroxide resistance gene conservation in Bacillus pumilus SAFR-032.</title>
        <authorList>
            <person name="Gioia J."/>
            <person name="Yerrapragada S."/>
            <person name="Qin X."/>
            <person name="Jiang H."/>
            <person name="Igboeli O.C."/>
            <person name="Muzny D."/>
            <person name="Dugan-Rocha S."/>
            <person name="Ding Y."/>
            <person name="Hawes A."/>
            <person name="Liu W."/>
            <person name="Perez L."/>
            <person name="Kovar C."/>
            <person name="Dinh H."/>
            <person name="Lee S."/>
            <person name="Nazareth L."/>
            <person name="Blyth P."/>
            <person name="Holder M."/>
            <person name="Buhay C."/>
            <person name="Tirumalai M.R."/>
            <person name="Liu Y."/>
            <person name="Dasgupta I."/>
            <person name="Bokhetache L."/>
            <person name="Fujita M."/>
            <person name="Karouia F."/>
            <person name="Eswara Moorthy P."/>
            <person name="Siefert J."/>
            <person name="Uzman A."/>
            <person name="Buzumbo P."/>
            <person name="Verma A."/>
            <person name="Zwiya H."/>
            <person name="McWilliams B.D."/>
            <person name="Olowu A."/>
            <person name="Clinkenbeard K.D."/>
            <person name="Newcombe D."/>
            <person name="Golebiewski L."/>
            <person name="Petrosino J.F."/>
            <person name="Nicholson W.L."/>
            <person name="Fox G.E."/>
            <person name="Venkateswaran K."/>
            <person name="Highlander S.K."/>
            <person name="Weinstock G.M."/>
        </authorList>
    </citation>
    <scope>NUCLEOTIDE SEQUENCE [LARGE SCALE GENOMIC DNA]</scope>
    <source>
        <strain>SAFR-032</strain>
    </source>
</reference>
<organism>
    <name type="scientific">Bacillus pumilus (strain SAFR-032)</name>
    <dbReference type="NCBI Taxonomy" id="315750"/>
    <lineage>
        <taxon>Bacteria</taxon>
        <taxon>Bacillati</taxon>
        <taxon>Bacillota</taxon>
        <taxon>Bacilli</taxon>
        <taxon>Bacillales</taxon>
        <taxon>Bacillaceae</taxon>
        <taxon>Bacillus</taxon>
    </lineage>
</organism>
<proteinExistence type="inferred from homology"/>
<protein>
    <recommendedName>
        <fullName evidence="1">Large ribosomal subunit protein bL33A</fullName>
    </recommendedName>
    <alternativeName>
        <fullName evidence="1">50S ribosomal protein L33 1</fullName>
    </alternativeName>
</protein>
<sequence length="49" mass="5610">MRKKITLACKDCGSRNYTTMKSDASAAERLEVKKYCKTCNSHKTHLETK</sequence>
<accession>A8F967</accession>
<dbReference type="EMBL" id="CP000813">
    <property type="protein sequence ID" value="ABV60784.1"/>
    <property type="molecule type" value="Genomic_DNA"/>
</dbReference>
<dbReference type="SMR" id="A8F967"/>
<dbReference type="STRING" id="315750.BPUM_0084"/>
<dbReference type="KEGG" id="bpu:BPUM_0084"/>
<dbReference type="eggNOG" id="COG0267">
    <property type="taxonomic scope" value="Bacteria"/>
</dbReference>
<dbReference type="HOGENOM" id="CLU_190949_0_2_9"/>
<dbReference type="OrthoDB" id="9801333at2"/>
<dbReference type="Proteomes" id="UP000001355">
    <property type="component" value="Chromosome"/>
</dbReference>
<dbReference type="GO" id="GO:0005737">
    <property type="term" value="C:cytoplasm"/>
    <property type="evidence" value="ECO:0007669"/>
    <property type="project" value="UniProtKB-ARBA"/>
</dbReference>
<dbReference type="GO" id="GO:1990904">
    <property type="term" value="C:ribonucleoprotein complex"/>
    <property type="evidence" value="ECO:0007669"/>
    <property type="project" value="UniProtKB-KW"/>
</dbReference>
<dbReference type="GO" id="GO:0005840">
    <property type="term" value="C:ribosome"/>
    <property type="evidence" value="ECO:0007669"/>
    <property type="project" value="UniProtKB-KW"/>
</dbReference>
<dbReference type="GO" id="GO:0003735">
    <property type="term" value="F:structural constituent of ribosome"/>
    <property type="evidence" value="ECO:0007669"/>
    <property type="project" value="InterPro"/>
</dbReference>
<dbReference type="GO" id="GO:0006412">
    <property type="term" value="P:translation"/>
    <property type="evidence" value="ECO:0007669"/>
    <property type="project" value="UniProtKB-UniRule"/>
</dbReference>
<dbReference type="Gene3D" id="2.20.28.120">
    <property type="entry name" value="Ribosomal protein L33"/>
    <property type="match status" value="1"/>
</dbReference>
<dbReference type="HAMAP" id="MF_00294">
    <property type="entry name" value="Ribosomal_bL33"/>
    <property type="match status" value="1"/>
</dbReference>
<dbReference type="InterPro" id="IPR001705">
    <property type="entry name" value="Ribosomal_bL33"/>
</dbReference>
<dbReference type="InterPro" id="IPR018264">
    <property type="entry name" value="Ribosomal_bL33_CS"/>
</dbReference>
<dbReference type="InterPro" id="IPR038584">
    <property type="entry name" value="Ribosomal_bL33_sf"/>
</dbReference>
<dbReference type="InterPro" id="IPR011332">
    <property type="entry name" value="Ribosomal_zn-bd"/>
</dbReference>
<dbReference type="NCBIfam" id="NF001764">
    <property type="entry name" value="PRK00504.1"/>
    <property type="match status" value="1"/>
</dbReference>
<dbReference type="NCBIfam" id="NF001860">
    <property type="entry name" value="PRK00595.1"/>
    <property type="match status" value="1"/>
</dbReference>
<dbReference type="NCBIfam" id="TIGR01023">
    <property type="entry name" value="rpmG_bact"/>
    <property type="match status" value="1"/>
</dbReference>
<dbReference type="Pfam" id="PF00471">
    <property type="entry name" value="Ribosomal_L33"/>
    <property type="match status" value="1"/>
</dbReference>
<dbReference type="SUPFAM" id="SSF57829">
    <property type="entry name" value="Zn-binding ribosomal proteins"/>
    <property type="match status" value="1"/>
</dbReference>
<dbReference type="PROSITE" id="PS00582">
    <property type="entry name" value="RIBOSOMAL_L33"/>
    <property type="match status" value="1"/>
</dbReference>
<keyword id="KW-0687">Ribonucleoprotein</keyword>
<keyword id="KW-0689">Ribosomal protein</keyword>
<gene>
    <name evidence="1" type="primary">rpmG1</name>
    <name type="ordered locus">BPUM_0084</name>
</gene>
<name>RL331_BACP2</name>
<feature type="chain" id="PRO_0000356395" description="Large ribosomal subunit protein bL33A">
    <location>
        <begin position="1"/>
        <end position="49"/>
    </location>
</feature>
<comment type="similarity">
    <text evidence="1">Belongs to the bacterial ribosomal protein bL33 family.</text>
</comment>